<proteinExistence type="inferred from homology"/>
<keyword id="KW-0150">Chloroplast</keyword>
<keyword id="KW-0934">Plastid</keyword>
<keyword id="KW-1185">Reference proteome</keyword>
<keyword id="KW-0687">Ribonucleoprotein</keyword>
<keyword id="KW-0689">Ribosomal protein</keyword>
<keyword id="KW-0694">RNA-binding</keyword>
<keyword id="KW-0699">rRNA-binding</keyword>
<protein>
    <recommendedName>
        <fullName evidence="2">Large ribosomal subunit protein uL22c</fullName>
    </recommendedName>
    <alternativeName>
        <fullName>50S ribosomal protein L22, chloroplastic</fullName>
    </alternativeName>
</protein>
<evidence type="ECO:0000250" key="1"/>
<evidence type="ECO:0000305" key="2"/>
<comment type="function">
    <text evidence="1">This protein binds specifically to 23S rRNA.</text>
</comment>
<comment type="function">
    <text evidence="1">The globular domain of the protein is located near the polypeptide exit tunnel on the outside of the subunit, while an extended beta-hairpin is found that lines the wall of the exit tunnel in the center of the 70S ribosome.</text>
</comment>
<comment type="subunit">
    <text evidence="1">Part of the 50S ribosomal subunit.</text>
</comment>
<comment type="subcellular location">
    <subcellularLocation>
        <location>Plastid</location>
        <location>Chloroplast</location>
    </subcellularLocation>
</comment>
<comment type="similarity">
    <text evidence="2">Belongs to the universal ribosomal protein uL22 family.</text>
</comment>
<name>RK22_SOLLC</name>
<organism>
    <name type="scientific">Solanum lycopersicum</name>
    <name type="common">Tomato</name>
    <name type="synonym">Lycopersicon esculentum</name>
    <dbReference type="NCBI Taxonomy" id="4081"/>
    <lineage>
        <taxon>Eukaryota</taxon>
        <taxon>Viridiplantae</taxon>
        <taxon>Streptophyta</taxon>
        <taxon>Embryophyta</taxon>
        <taxon>Tracheophyta</taxon>
        <taxon>Spermatophyta</taxon>
        <taxon>Magnoliopsida</taxon>
        <taxon>eudicotyledons</taxon>
        <taxon>Gunneridae</taxon>
        <taxon>Pentapetalae</taxon>
        <taxon>asterids</taxon>
        <taxon>lamiids</taxon>
        <taxon>Solanales</taxon>
        <taxon>Solanaceae</taxon>
        <taxon>Solanoideae</taxon>
        <taxon>Solaneae</taxon>
        <taxon>Solanum</taxon>
        <taxon>Solanum subgen. Lycopersicon</taxon>
    </lineage>
</organism>
<sequence>MLKKKKTEVYALGEHISMSADKARRVIDQIRGRSYEETLMILELMPYRACYPILKLVYSAAANASYNMGSSETNLVISKAEVNEGTTVKKLKPRARGRSFPIKRSTCHITIVMKDISLDDEYGEMSSLKKTRWKKKSTAMTYRDMYNSGGLWDKK</sequence>
<accession>Q2MI61</accession>
<dbReference type="EMBL" id="DQ347959">
    <property type="protein sequence ID" value="ABC56339.1"/>
    <property type="molecule type" value="Genomic_DNA"/>
</dbReference>
<dbReference type="EMBL" id="AM087200">
    <property type="protein sequence ID" value="CAJ32433.1"/>
    <property type="molecule type" value="Genomic_DNA"/>
</dbReference>
<dbReference type="RefSeq" id="AP_004967.1">
    <property type="nucleotide sequence ID" value="AC_000188.1"/>
</dbReference>
<dbReference type="RefSeq" id="YP_008563128.1">
    <property type="nucleotide sequence ID" value="NC_007898.3"/>
</dbReference>
<dbReference type="SMR" id="Q2MI61"/>
<dbReference type="FunCoup" id="Q2MI61">
    <property type="interactions" value="367"/>
</dbReference>
<dbReference type="STRING" id="4081.Q2MI61"/>
<dbReference type="GeneID" id="3950468"/>
<dbReference type="KEGG" id="sly:3950468"/>
<dbReference type="InParanoid" id="Q2MI61"/>
<dbReference type="OrthoDB" id="1840754at2759"/>
<dbReference type="Proteomes" id="UP000004994">
    <property type="component" value="Chloroplast"/>
</dbReference>
<dbReference type="GO" id="GO:0009507">
    <property type="term" value="C:chloroplast"/>
    <property type="evidence" value="ECO:0007669"/>
    <property type="project" value="UniProtKB-SubCell"/>
</dbReference>
<dbReference type="GO" id="GO:0015934">
    <property type="term" value="C:large ribosomal subunit"/>
    <property type="evidence" value="ECO:0000318"/>
    <property type="project" value="GO_Central"/>
</dbReference>
<dbReference type="GO" id="GO:0019843">
    <property type="term" value="F:rRNA binding"/>
    <property type="evidence" value="ECO:0007669"/>
    <property type="project" value="UniProtKB-UniRule"/>
</dbReference>
<dbReference type="GO" id="GO:0003735">
    <property type="term" value="F:structural constituent of ribosome"/>
    <property type="evidence" value="ECO:0000318"/>
    <property type="project" value="GO_Central"/>
</dbReference>
<dbReference type="GO" id="GO:0006412">
    <property type="term" value="P:translation"/>
    <property type="evidence" value="ECO:0000318"/>
    <property type="project" value="GO_Central"/>
</dbReference>
<dbReference type="CDD" id="cd00336">
    <property type="entry name" value="Ribosomal_L22"/>
    <property type="match status" value="1"/>
</dbReference>
<dbReference type="FunFam" id="3.90.470.10:FF:000006">
    <property type="entry name" value="50S ribosomal protein L22, chloroplastic"/>
    <property type="match status" value="1"/>
</dbReference>
<dbReference type="Gene3D" id="3.90.470.10">
    <property type="entry name" value="Ribosomal protein L22/L17"/>
    <property type="match status" value="1"/>
</dbReference>
<dbReference type="HAMAP" id="MF_01331_B">
    <property type="entry name" value="Ribosomal_uL22_B"/>
    <property type="match status" value="1"/>
</dbReference>
<dbReference type="InterPro" id="IPR001063">
    <property type="entry name" value="Ribosomal_uL22"/>
</dbReference>
<dbReference type="InterPro" id="IPR005727">
    <property type="entry name" value="Ribosomal_uL22_bac/chlpt-type"/>
</dbReference>
<dbReference type="InterPro" id="IPR047867">
    <property type="entry name" value="Ribosomal_uL22_bac/org-type"/>
</dbReference>
<dbReference type="InterPro" id="IPR018260">
    <property type="entry name" value="Ribosomal_uL22_CS"/>
</dbReference>
<dbReference type="InterPro" id="IPR036394">
    <property type="entry name" value="Ribosomal_uL22_sf"/>
</dbReference>
<dbReference type="NCBIfam" id="TIGR01044">
    <property type="entry name" value="rplV_bact"/>
    <property type="match status" value="1"/>
</dbReference>
<dbReference type="PANTHER" id="PTHR13501">
    <property type="entry name" value="CHLOROPLAST 50S RIBOSOMAL PROTEIN L22-RELATED"/>
    <property type="match status" value="1"/>
</dbReference>
<dbReference type="PANTHER" id="PTHR13501:SF10">
    <property type="entry name" value="LARGE RIBOSOMAL SUBUNIT PROTEIN UL22M"/>
    <property type="match status" value="1"/>
</dbReference>
<dbReference type="Pfam" id="PF00237">
    <property type="entry name" value="Ribosomal_L22"/>
    <property type="match status" value="1"/>
</dbReference>
<dbReference type="SUPFAM" id="SSF54843">
    <property type="entry name" value="Ribosomal protein L22"/>
    <property type="match status" value="1"/>
</dbReference>
<dbReference type="PROSITE" id="PS00464">
    <property type="entry name" value="RIBOSOMAL_L22"/>
    <property type="match status" value="1"/>
</dbReference>
<reference key="1">
    <citation type="journal article" date="2006" name="Theor. Appl. Genet.">
        <title>Complete chloroplast genome sequences of Solanum bulbocastanum, Solanum lycopersicum and comparative analyses with other Solanaceae genomes.</title>
        <authorList>
            <person name="Daniell H."/>
            <person name="Lee S.-B."/>
            <person name="Grevich J."/>
            <person name="Saski C."/>
            <person name="Quesada-Vargas T."/>
            <person name="Guda C."/>
            <person name="Tomkins J."/>
            <person name="Jansen R.K."/>
        </authorList>
    </citation>
    <scope>NUCLEOTIDE SEQUENCE [LARGE SCALE GENOMIC DNA]</scope>
    <source>
        <strain>cv. LA3023</strain>
    </source>
</reference>
<reference key="2">
    <citation type="journal article" date="2006" name="J. Mol. Evol.">
        <title>Sequence of the tomato chloroplast DNA and evolutionary comparison of solanaceous plastid genomes.</title>
        <authorList>
            <person name="Kahlau S."/>
            <person name="Aspinall S."/>
            <person name="Gray J.C."/>
            <person name="Bock R."/>
        </authorList>
    </citation>
    <scope>NUCLEOTIDE SEQUENCE [LARGE SCALE GENOMIC DNA]</scope>
    <source>
        <strain>cv. IPA-6</strain>
    </source>
</reference>
<feature type="chain" id="PRO_0000243240" description="Large ribosomal subunit protein uL22c">
    <location>
        <begin position="1"/>
        <end position="155"/>
    </location>
</feature>
<geneLocation type="chloroplast"/>
<gene>
    <name type="primary">rpl22</name>
</gene>